<proteinExistence type="evidence at protein level"/>
<evidence type="ECO:0000250" key="1"/>
<evidence type="ECO:0000250" key="2">
    <source>
        <dbReference type="UniProtKB" id="P62258"/>
    </source>
</evidence>
<evidence type="ECO:0000250" key="3">
    <source>
        <dbReference type="UniProtKB" id="P62261"/>
    </source>
</evidence>
<evidence type="ECO:0000250" key="4">
    <source>
        <dbReference type="UniProtKB" id="P62262"/>
    </source>
</evidence>
<evidence type="ECO:0000255" key="5"/>
<evidence type="ECO:0000256" key="6">
    <source>
        <dbReference type="SAM" id="MobiDB-lite"/>
    </source>
</evidence>
<evidence type="ECO:0000269" key="7">
    <source>
    </source>
</evidence>
<evidence type="ECO:0000305" key="8"/>
<evidence type="ECO:0000312" key="9">
    <source>
        <dbReference type="EMBL" id="CAG30963.1"/>
    </source>
</evidence>
<reference evidence="8 9" key="1">
    <citation type="journal article" date="2005" name="Genome Biol.">
        <title>Full-length cDNAs from chicken bursal lymphocytes to facilitate gene function analysis.</title>
        <authorList>
            <person name="Caldwell R.B."/>
            <person name="Kierzek A.M."/>
            <person name="Arakawa H."/>
            <person name="Bezzubov Y."/>
            <person name="Zaim J."/>
            <person name="Fiedler P."/>
            <person name="Kutter S."/>
            <person name="Blagodatski A."/>
            <person name="Kostovska D."/>
            <person name="Koter M."/>
            <person name="Plachy J."/>
            <person name="Carninci P."/>
            <person name="Hayashizaki Y."/>
            <person name="Buerstedde J.-M."/>
        </authorList>
    </citation>
    <scope>NUCLEOTIDE SEQUENCE [LARGE SCALE MRNA]</scope>
    <source>
        <strain evidence="9">CB</strain>
        <tissue evidence="9">Bursa of Fabricius</tissue>
    </source>
</reference>
<reference evidence="8" key="2">
    <citation type="journal article" date="2005" name="Proteomics">
        <title>Proteomic analysis of the Gallus gallus embryo at stage-29 of development.</title>
        <authorList>
            <person name="Agudo D."/>
            <person name="Gomez-Esquer F."/>
            <person name="Diaz-Gil G."/>
            <person name="Martinez-Arribas F."/>
            <person name="Delcan J."/>
            <person name="Schneider J."/>
            <person name="Palomar M.A."/>
            <person name="Linares R."/>
        </authorList>
    </citation>
    <scope>IDENTIFICATION</scope>
    <scope>MASS SPECTROMETRY</scope>
    <source>
        <tissue evidence="7">Embryo</tissue>
    </source>
</reference>
<feature type="chain" id="PRO_0000223506" description="14-3-3 protein epsilon" evidence="8">
    <location>
        <begin position="1"/>
        <end position="255"/>
    </location>
</feature>
<feature type="region of interest" description="Disordered" evidence="6">
    <location>
        <begin position="234"/>
        <end position="255"/>
    </location>
</feature>
<feature type="site" description="Interaction with phosphoserine on interacting protein" evidence="1">
    <location>
        <position position="57"/>
    </location>
</feature>
<feature type="site" description="Interaction with phosphoserine on interacting protein" evidence="1">
    <location>
        <position position="130"/>
    </location>
</feature>
<feature type="modified residue" description="N-acetylmethionine" evidence="4">
    <location>
        <position position="1"/>
    </location>
</feature>
<comment type="function">
    <text evidence="3">Adapter protein implicated in the regulation of a large spectrum of both general and specialized signaling pathways. Binds to a large number of partners, usually by recognition of a phosphoserine or phosphothreonine motif. Binding generally results in the modulation of the activity of the binding partner.</text>
</comment>
<comment type="subunit">
    <text evidence="1">Homodimer, and heterodimer with other family members.</text>
</comment>
<comment type="subcellular location">
    <subcellularLocation>
        <location evidence="2">Nucleus</location>
    </subcellularLocation>
    <subcellularLocation>
        <location evidence="2">Cytoplasm</location>
    </subcellularLocation>
</comment>
<comment type="mass spectrometry" mass="29440.0" error="2.0" method="MALDI" evidence="7"/>
<comment type="similarity">
    <text evidence="5">Belongs to the 14-3-3 family.</text>
</comment>
<protein>
    <recommendedName>
        <fullName>14-3-3 protein epsilon</fullName>
        <shortName>14-3-3E</shortName>
    </recommendedName>
</protein>
<keyword id="KW-0007">Acetylation</keyword>
<keyword id="KW-0963">Cytoplasm</keyword>
<keyword id="KW-0539">Nucleus</keyword>
<keyword id="KW-1185">Reference proteome</keyword>
<sequence length="255" mass="29174">MDDREDLVYQAKLAEQAERYDEMVESMKKVAGMDVELTVEERNLLSVAYKNVIGARRASWRIISSIEQKEENKGGEDKLKMIREYRQMVETELKLICCDILDVLDKHLIPAANTGESKVFYYKMKGDYHRYLAEFATGNDRKEAAENSLVAYKAASDIAMTELPPTHPIRLGLALNFSVFYYEILNSPDRACRLAKAAFDDAIAELDTLSEESYKDSTLIMQLLRDNLTLWTSDMQGDGEEQNKEALQDVEDENQ</sequence>
<dbReference type="EMBL" id="AJ719304">
    <property type="protein sequence ID" value="CAG30963.1"/>
    <property type="molecule type" value="mRNA"/>
</dbReference>
<dbReference type="RefSeq" id="NP_001006219.1">
    <property type="nucleotide sequence ID" value="NM_001006219.2"/>
</dbReference>
<dbReference type="SMR" id="Q5ZMT0"/>
<dbReference type="BioGRID" id="678887">
    <property type="interactions" value="3"/>
</dbReference>
<dbReference type="FunCoup" id="Q5ZMT0">
    <property type="interactions" value="2726"/>
</dbReference>
<dbReference type="IntAct" id="Q5ZMT0">
    <property type="interactions" value="1"/>
</dbReference>
<dbReference type="STRING" id="9031.ENSGALP00000039133"/>
<dbReference type="PaxDb" id="9031-ENSGALP00000039133"/>
<dbReference type="Ensembl" id="ENSGALT00010070940.1">
    <property type="protein sequence ID" value="ENSGALP00010043631.1"/>
    <property type="gene ID" value="ENSGALG00010029332.1"/>
</dbReference>
<dbReference type="GeneID" id="417554"/>
<dbReference type="KEGG" id="gga:417554"/>
<dbReference type="CTD" id="7531"/>
<dbReference type="VEuPathDB" id="HostDB:geneid_417554"/>
<dbReference type="eggNOG" id="KOG0841">
    <property type="taxonomic scope" value="Eukaryota"/>
</dbReference>
<dbReference type="GeneTree" id="ENSGT01110000267238"/>
<dbReference type="HOGENOM" id="CLU_058290_0_2_1"/>
<dbReference type="InParanoid" id="Q5ZMT0"/>
<dbReference type="OMA" id="SKGTDKH"/>
<dbReference type="OrthoDB" id="10260625at2759"/>
<dbReference type="PhylomeDB" id="Q5ZMT0"/>
<dbReference type="Reactome" id="R-GGA-2028269">
    <property type="pathway name" value="Signaling by Hippo"/>
</dbReference>
<dbReference type="Reactome" id="R-GGA-2565942">
    <property type="pathway name" value="Regulation of PLK1 Activity at G2/M Transition"/>
</dbReference>
<dbReference type="Reactome" id="R-GGA-3371453">
    <property type="pathway name" value="Regulation of HSF1-mediated heat shock response"/>
</dbReference>
<dbReference type="Reactome" id="R-GGA-3371511">
    <property type="pathway name" value="HSF1 activation"/>
</dbReference>
<dbReference type="Reactome" id="R-GGA-380259">
    <property type="pathway name" value="Loss of Nlp from mitotic centrosomes"/>
</dbReference>
<dbReference type="Reactome" id="R-GGA-380270">
    <property type="pathway name" value="Recruitment of mitotic centrosome proteins and complexes"/>
</dbReference>
<dbReference type="Reactome" id="R-GGA-380284">
    <property type="pathway name" value="Loss of proteins required for interphase microtubule organization from the centrosome"/>
</dbReference>
<dbReference type="Reactome" id="R-GGA-380320">
    <property type="pathway name" value="Recruitment of NuMA to mitotic centrosomes"/>
</dbReference>
<dbReference type="Reactome" id="R-GGA-5620912">
    <property type="pathway name" value="Anchoring of the basal body to the plasma membrane"/>
</dbReference>
<dbReference type="Reactome" id="R-GGA-5628897">
    <property type="pathway name" value="TP53 Regulates Metabolic Genes"/>
</dbReference>
<dbReference type="Reactome" id="R-GGA-8854518">
    <property type="pathway name" value="AURKA Activation by TPX2"/>
</dbReference>
<dbReference type="Reactome" id="R-GGA-8876198">
    <property type="pathway name" value="RAB GEFs exchange GTP for GDP on RABs"/>
</dbReference>
<dbReference type="PRO" id="PR:Q5ZMT0"/>
<dbReference type="Proteomes" id="UP000000539">
    <property type="component" value="Chromosome 19"/>
</dbReference>
<dbReference type="Bgee" id="ENSGALG00000002661">
    <property type="expression patterns" value="Expressed in brain and 13 other cell types or tissues"/>
</dbReference>
<dbReference type="GO" id="GO:0005737">
    <property type="term" value="C:cytoplasm"/>
    <property type="evidence" value="ECO:0000250"/>
    <property type="project" value="UniProtKB"/>
</dbReference>
<dbReference type="GO" id="GO:0005829">
    <property type="term" value="C:cytosol"/>
    <property type="evidence" value="ECO:0007669"/>
    <property type="project" value="Ensembl"/>
</dbReference>
<dbReference type="GO" id="GO:0005783">
    <property type="term" value="C:endoplasmic reticulum"/>
    <property type="evidence" value="ECO:0007669"/>
    <property type="project" value="Ensembl"/>
</dbReference>
<dbReference type="GO" id="GO:0005634">
    <property type="term" value="C:nucleus"/>
    <property type="evidence" value="ECO:0000250"/>
    <property type="project" value="UniProtKB"/>
</dbReference>
<dbReference type="GO" id="GO:0005886">
    <property type="term" value="C:plasma membrane"/>
    <property type="evidence" value="ECO:0007669"/>
    <property type="project" value="Ensembl"/>
</dbReference>
<dbReference type="GO" id="GO:0019855">
    <property type="term" value="F:calcium channel inhibitor activity"/>
    <property type="evidence" value="ECO:0007669"/>
    <property type="project" value="Ensembl"/>
</dbReference>
<dbReference type="GO" id="GO:0042826">
    <property type="term" value="F:histone deacetylase binding"/>
    <property type="evidence" value="ECO:0007669"/>
    <property type="project" value="Ensembl"/>
</dbReference>
<dbReference type="GO" id="GO:0042802">
    <property type="term" value="F:identical protein binding"/>
    <property type="evidence" value="ECO:0007669"/>
    <property type="project" value="Ensembl"/>
</dbReference>
<dbReference type="GO" id="GO:0050815">
    <property type="term" value="F:phosphoserine residue binding"/>
    <property type="evidence" value="ECO:0000318"/>
    <property type="project" value="GO_Central"/>
</dbReference>
<dbReference type="GO" id="GO:0015459">
    <property type="term" value="F:potassium channel regulator activity"/>
    <property type="evidence" value="ECO:0007669"/>
    <property type="project" value="Ensembl"/>
</dbReference>
<dbReference type="GO" id="GO:0046982">
    <property type="term" value="F:protein heterodimerization activity"/>
    <property type="evidence" value="ECO:0007669"/>
    <property type="project" value="Ensembl"/>
</dbReference>
<dbReference type="GO" id="GO:0140311">
    <property type="term" value="F:protein sequestering activity"/>
    <property type="evidence" value="ECO:0007669"/>
    <property type="project" value="Ensembl"/>
</dbReference>
<dbReference type="GO" id="GO:0097110">
    <property type="term" value="F:scaffold protein binding"/>
    <property type="evidence" value="ECO:0007669"/>
    <property type="project" value="Ensembl"/>
</dbReference>
<dbReference type="GO" id="GO:0035591">
    <property type="term" value="F:signaling adaptor activity"/>
    <property type="evidence" value="ECO:0007669"/>
    <property type="project" value="Ensembl"/>
</dbReference>
<dbReference type="GO" id="GO:0044325">
    <property type="term" value="F:transmembrane transporter binding"/>
    <property type="evidence" value="ECO:0007669"/>
    <property type="project" value="Ensembl"/>
</dbReference>
<dbReference type="GO" id="GO:0031625">
    <property type="term" value="F:ubiquitin protein ligase binding"/>
    <property type="evidence" value="ECO:0007669"/>
    <property type="project" value="Ensembl"/>
</dbReference>
<dbReference type="GO" id="GO:0034605">
    <property type="term" value="P:cellular response to heat"/>
    <property type="evidence" value="ECO:0000250"/>
    <property type="project" value="UniProtKB"/>
</dbReference>
<dbReference type="GO" id="GO:0002753">
    <property type="term" value="P:cytoplasmic pattern recognition receptor signaling pathway"/>
    <property type="evidence" value="ECO:0007669"/>
    <property type="project" value="Ensembl"/>
</dbReference>
<dbReference type="GO" id="GO:0030007">
    <property type="term" value="P:intracellular potassium ion homeostasis"/>
    <property type="evidence" value="ECO:0007669"/>
    <property type="project" value="Ensembl"/>
</dbReference>
<dbReference type="GO" id="GO:0000165">
    <property type="term" value="P:MAPK cascade"/>
    <property type="evidence" value="ECO:0000250"/>
    <property type="project" value="UniProtKB"/>
</dbReference>
<dbReference type="GO" id="GO:1905913">
    <property type="term" value="P:negative regulation of calcium ion export across plasma membrane"/>
    <property type="evidence" value="ECO:0007669"/>
    <property type="project" value="Ensembl"/>
</dbReference>
<dbReference type="GO" id="GO:0034122">
    <property type="term" value="P:negative regulation of toll-like receptor signaling pathway"/>
    <property type="evidence" value="ECO:0007669"/>
    <property type="project" value="Ensembl"/>
</dbReference>
<dbReference type="GO" id="GO:0035332">
    <property type="term" value="P:positive regulation of hippo signaling"/>
    <property type="evidence" value="ECO:0007669"/>
    <property type="project" value="Ensembl"/>
</dbReference>
<dbReference type="GO" id="GO:0046827">
    <property type="term" value="P:positive regulation of protein export from nucleus"/>
    <property type="evidence" value="ECO:0000250"/>
    <property type="project" value="UniProtKB"/>
</dbReference>
<dbReference type="GO" id="GO:0008104">
    <property type="term" value="P:protein localization"/>
    <property type="evidence" value="ECO:0000318"/>
    <property type="project" value="GO_Central"/>
</dbReference>
<dbReference type="GO" id="GO:0070972">
    <property type="term" value="P:protein localization to endoplasmic reticulum"/>
    <property type="evidence" value="ECO:0007669"/>
    <property type="project" value="Ensembl"/>
</dbReference>
<dbReference type="GO" id="GO:0034504">
    <property type="term" value="P:protein localization to nucleus"/>
    <property type="evidence" value="ECO:0007669"/>
    <property type="project" value="Ensembl"/>
</dbReference>
<dbReference type="GO" id="GO:0051480">
    <property type="term" value="P:regulation of cytosolic calcium ion concentration"/>
    <property type="evidence" value="ECO:0007669"/>
    <property type="project" value="Ensembl"/>
</dbReference>
<dbReference type="GO" id="GO:0060306">
    <property type="term" value="P:regulation of membrane repolarization"/>
    <property type="evidence" value="ECO:0007669"/>
    <property type="project" value="Ensembl"/>
</dbReference>
<dbReference type="GO" id="GO:0007346">
    <property type="term" value="P:regulation of mitotic cell cycle"/>
    <property type="evidence" value="ECO:0000318"/>
    <property type="project" value="GO_Central"/>
</dbReference>
<dbReference type="GO" id="GO:1901379">
    <property type="term" value="P:regulation of potassium ion transmembrane transport"/>
    <property type="evidence" value="ECO:0007669"/>
    <property type="project" value="Ensembl"/>
</dbReference>
<dbReference type="GO" id="GO:0007165">
    <property type="term" value="P:signal transduction"/>
    <property type="evidence" value="ECO:0000318"/>
    <property type="project" value="GO_Central"/>
</dbReference>
<dbReference type="CDD" id="cd10020">
    <property type="entry name" value="14-3-3_epsilon"/>
    <property type="match status" value="1"/>
</dbReference>
<dbReference type="FunFam" id="1.20.190.20:FF:000002">
    <property type="entry name" value="14-3-3 protein epsilon"/>
    <property type="match status" value="1"/>
</dbReference>
<dbReference type="Gene3D" id="1.20.190.20">
    <property type="entry name" value="14-3-3 domain"/>
    <property type="match status" value="1"/>
</dbReference>
<dbReference type="InterPro" id="IPR000308">
    <property type="entry name" value="14-3-3"/>
</dbReference>
<dbReference type="InterPro" id="IPR023409">
    <property type="entry name" value="14-3-3_CS"/>
</dbReference>
<dbReference type="InterPro" id="IPR036815">
    <property type="entry name" value="14-3-3_dom_sf"/>
</dbReference>
<dbReference type="InterPro" id="IPR023410">
    <property type="entry name" value="14-3-3_domain"/>
</dbReference>
<dbReference type="PANTHER" id="PTHR18860">
    <property type="entry name" value="14-3-3 PROTEIN"/>
    <property type="match status" value="1"/>
</dbReference>
<dbReference type="Pfam" id="PF00244">
    <property type="entry name" value="14-3-3"/>
    <property type="match status" value="1"/>
</dbReference>
<dbReference type="PIRSF" id="PIRSF000868">
    <property type="entry name" value="14-3-3"/>
    <property type="match status" value="1"/>
</dbReference>
<dbReference type="PRINTS" id="PR00305">
    <property type="entry name" value="1433ZETA"/>
</dbReference>
<dbReference type="SMART" id="SM00101">
    <property type="entry name" value="14_3_3"/>
    <property type="match status" value="1"/>
</dbReference>
<dbReference type="SUPFAM" id="SSF48445">
    <property type="entry name" value="14-3-3 protein"/>
    <property type="match status" value="1"/>
</dbReference>
<dbReference type="PROSITE" id="PS00796">
    <property type="entry name" value="1433_1"/>
    <property type="match status" value="1"/>
</dbReference>
<dbReference type="PROSITE" id="PS00797">
    <property type="entry name" value="1433_2"/>
    <property type="match status" value="1"/>
</dbReference>
<accession>Q5ZMT0</accession>
<accession>P84171</accession>
<name>1433E_CHICK</name>
<organism>
    <name type="scientific">Gallus gallus</name>
    <name type="common">Chicken</name>
    <dbReference type="NCBI Taxonomy" id="9031"/>
    <lineage>
        <taxon>Eukaryota</taxon>
        <taxon>Metazoa</taxon>
        <taxon>Chordata</taxon>
        <taxon>Craniata</taxon>
        <taxon>Vertebrata</taxon>
        <taxon>Euteleostomi</taxon>
        <taxon>Archelosauria</taxon>
        <taxon>Archosauria</taxon>
        <taxon>Dinosauria</taxon>
        <taxon>Saurischia</taxon>
        <taxon>Theropoda</taxon>
        <taxon>Coelurosauria</taxon>
        <taxon>Aves</taxon>
        <taxon>Neognathae</taxon>
        <taxon>Galloanserae</taxon>
        <taxon>Galliformes</taxon>
        <taxon>Phasianidae</taxon>
        <taxon>Phasianinae</taxon>
        <taxon>Gallus</taxon>
    </lineage>
</organism>
<gene>
    <name evidence="4" type="primary">YWHAE</name>
    <name type="ORF">RCJMB04_1e8</name>
</gene>